<organism>
    <name type="scientific">Mus musculus</name>
    <name type="common">Mouse</name>
    <dbReference type="NCBI Taxonomy" id="10090"/>
    <lineage>
        <taxon>Eukaryota</taxon>
        <taxon>Metazoa</taxon>
        <taxon>Chordata</taxon>
        <taxon>Craniata</taxon>
        <taxon>Vertebrata</taxon>
        <taxon>Euteleostomi</taxon>
        <taxon>Mammalia</taxon>
        <taxon>Eutheria</taxon>
        <taxon>Euarchontoglires</taxon>
        <taxon>Glires</taxon>
        <taxon>Rodentia</taxon>
        <taxon>Myomorpha</taxon>
        <taxon>Muroidea</taxon>
        <taxon>Muridae</taxon>
        <taxon>Murinae</taxon>
        <taxon>Mus</taxon>
        <taxon>Mus</taxon>
    </lineage>
</organism>
<comment type="function">
    <text>Potential odorant receptor.</text>
</comment>
<comment type="subcellular location">
    <subcellularLocation>
        <location evidence="3">Cell membrane</location>
        <topology evidence="1">Multi-pass membrane protein</topology>
    </subcellularLocation>
</comment>
<comment type="similarity">
    <text evidence="2">Belongs to the G-protein coupled receptor 1 family.</text>
</comment>
<protein>
    <recommendedName>
        <fullName evidence="3">Olfactory receptor 5P72</fullName>
    </recommendedName>
    <alternativeName>
        <fullName>Olfactory receptor 204-9</fullName>
    </alternativeName>
    <alternativeName>
        <fullName>Olfactory receptor 497</fullName>
    </alternativeName>
</protein>
<feature type="chain" id="PRO_0000150851" description="Olfactory receptor 5P72">
    <location>
        <begin position="1"/>
        <end position="314"/>
    </location>
</feature>
<feature type="topological domain" description="Extracellular" evidence="1">
    <location>
        <begin position="1"/>
        <end position="28"/>
    </location>
</feature>
<feature type="transmembrane region" description="Helical; Name=1" evidence="1">
    <location>
        <begin position="29"/>
        <end position="49"/>
    </location>
</feature>
<feature type="topological domain" description="Cytoplasmic" evidence="1">
    <location>
        <begin position="50"/>
        <end position="57"/>
    </location>
</feature>
<feature type="transmembrane region" description="Helical; Name=2" evidence="1">
    <location>
        <begin position="58"/>
        <end position="78"/>
    </location>
</feature>
<feature type="topological domain" description="Extracellular" evidence="1">
    <location>
        <begin position="79"/>
        <end position="102"/>
    </location>
</feature>
<feature type="transmembrane region" description="Helical; Name=3" evidence="1">
    <location>
        <begin position="103"/>
        <end position="123"/>
    </location>
</feature>
<feature type="topological domain" description="Cytoplasmic" evidence="1">
    <location>
        <begin position="124"/>
        <end position="136"/>
    </location>
</feature>
<feature type="transmembrane region" description="Helical; Name=4" evidence="1">
    <location>
        <begin position="137"/>
        <end position="157"/>
    </location>
</feature>
<feature type="topological domain" description="Extracellular" evidence="1">
    <location>
        <begin position="158"/>
        <end position="199"/>
    </location>
</feature>
<feature type="transmembrane region" description="Helical; Name=5" evidence="1">
    <location>
        <begin position="200"/>
        <end position="220"/>
    </location>
</feature>
<feature type="topological domain" description="Cytoplasmic" evidence="1">
    <location>
        <begin position="221"/>
        <end position="240"/>
    </location>
</feature>
<feature type="transmembrane region" description="Helical; Name=6" evidence="1">
    <location>
        <begin position="241"/>
        <end position="261"/>
    </location>
</feature>
<feature type="topological domain" description="Extracellular" evidence="1">
    <location>
        <begin position="262"/>
        <end position="274"/>
    </location>
</feature>
<feature type="transmembrane region" description="Helical; Name=7" evidence="1">
    <location>
        <begin position="275"/>
        <end position="295"/>
    </location>
</feature>
<feature type="topological domain" description="Cytoplasmic" evidence="1">
    <location>
        <begin position="296"/>
        <end position="314"/>
    </location>
</feature>
<feature type="glycosylation site" description="N-linked (GlcNAc...) asparagine" evidence="1">
    <location>
        <position position="8"/>
    </location>
</feature>
<feature type="disulfide bond" evidence="2">
    <location>
        <begin position="100"/>
        <end position="192"/>
    </location>
</feature>
<evidence type="ECO:0000255" key="1"/>
<evidence type="ECO:0000255" key="2">
    <source>
        <dbReference type="PROSITE-ProRule" id="PRU00521"/>
    </source>
</evidence>
<evidence type="ECO:0000305" key="3"/>
<evidence type="ECO:0000312" key="4">
    <source>
        <dbReference type="MGI" id="MGI:3030331"/>
    </source>
</evidence>
<name>O5P72_MOUSE</name>
<sequence>MAFLEVGNHTAVTEFILLGLTDDPVLRVVLFTIILCIYLVTVMGNLSTILLIRVSSQLHHPMYFFLSHLASVDMGLSSSVTPNMLLNFLIERNTISYLGCGIQQSLADFFGSVECFLLAAMAYDRFMAICNPLLYSTKMSTKVCVQLVVGSYIGGFLNASLIMFYFFSFLFCGPNRVDHFFCDFAPLVELSCSDVSVSVIVISFSAGSVTMITVFVIAVSYSYILITILKMHSIEGRHKAFSTCTSHLTAVTLYYGTITFIYVMPKSSFSTDQNKVVSVFYMVMIPMLNPLIYSLRNNEIKGAIKRQLGKKMSC</sequence>
<gene>
    <name evidence="4" type="primary">Or5p72</name>
    <name evidence="4" type="synonym">Mor204-9</name>
    <name evidence="4" type="synonym">Olfr497</name>
</gene>
<proteinExistence type="inferred from homology"/>
<reference key="1">
    <citation type="journal article" date="2002" name="Nat. Neurosci.">
        <title>The olfactory receptor gene superfamily of the mouse.</title>
        <authorList>
            <person name="Zhang X."/>
            <person name="Firestein S."/>
        </authorList>
    </citation>
    <scope>NUCLEOTIDE SEQUENCE [GENOMIC DNA]</scope>
</reference>
<reference key="2">
    <citation type="journal article" date="2002" name="Hum. Mol. Genet.">
        <title>Different evolutionary processes shaped the mouse and human olfactory receptor gene families.</title>
        <authorList>
            <person name="Young J.M."/>
            <person name="Friedman C."/>
            <person name="Williams E.M."/>
            <person name="Ross J.A."/>
            <person name="Tonnes-Priddy L."/>
            <person name="Trask B.J."/>
        </authorList>
    </citation>
    <scope>NUCLEOTIDE SEQUENCE [GENOMIC DNA]</scope>
</reference>
<reference key="3">
    <citation type="journal article" date="2002" name="Hum. Mol. Genet.">
        <authorList>
            <person name="Young J.M."/>
            <person name="Friedman C."/>
            <person name="Williams E.M."/>
            <person name="Ross J.A."/>
            <person name="Tonnes-Priddy L."/>
            <person name="Trask B.J."/>
        </authorList>
    </citation>
    <scope>ERRATUM OF PUBMED:11875048</scope>
</reference>
<keyword id="KW-1003">Cell membrane</keyword>
<keyword id="KW-1015">Disulfide bond</keyword>
<keyword id="KW-0297">G-protein coupled receptor</keyword>
<keyword id="KW-0325">Glycoprotein</keyword>
<keyword id="KW-0472">Membrane</keyword>
<keyword id="KW-0552">Olfaction</keyword>
<keyword id="KW-0675">Receptor</keyword>
<keyword id="KW-1185">Reference proteome</keyword>
<keyword id="KW-0716">Sensory transduction</keyword>
<keyword id="KW-0807">Transducer</keyword>
<keyword id="KW-0812">Transmembrane</keyword>
<keyword id="KW-1133">Transmembrane helix</keyword>
<accession>Q8VG08</accession>
<dbReference type="EMBL" id="AY073357">
    <property type="protein sequence ID" value="AAL61020.1"/>
    <property type="molecule type" value="Genomic_DNA"/>
</dbReference>
<dbReference type="EMBL" id="AY317605">
    <property type="protein sequence ID" value="AAP70999.1"/>
    <property type="molecule type" value="Genomic_DNA"/>
</dbReference>
<dbReference type="CCDS" id="CCDS21715.1"/>
<dbReference type="RefSeq" id="NP_666949.1">
    <property type="nucleotide sequence ID" value="NM_146738.1"/>
</dbReference>
<dbReference type="SMR" id="Q8VG08"/>
<dbReference type="FunCoup" id="Q8VG08">
    <property type="interactions" value="1128"/>
</dbReference>
<dbReference type="STRING" id="10090.ENSMUSP00000150439"/>
<dbReference type="GlyCosmos" id="Q8VG08">
    <property type="glycosylation" value="1 site, No reported glycans"/>
</dbReference>
<dbReference type="GlyGen" id="Q8VG08">
    <property type="glycosylation" value="1 site"/>
</dbReference>
<dbReference type="PaxDb" id="10090-ENSMUSP00000075741"/>
<dbReference type="DNASU" id="258733"/>
<dbReference type="Ensembl" id="ENSMUST00000076406.2">
    <property type="protein sequence ID" value="ENSMUSP00000075741.2"/>
    <property type="gene ID" value="ENSMUSG00000095239.5"/>
</dbReference>
<dbReference type="Ensembl" id="ENSMUST00000213521.3">
    <property type="protein sequence ID" value="ENSMUSP00000150439.2"/>
    <property type="gene ID" value="ENSMUSG00000095239.5"/>
</dbReference>
<dbReference type="GeneID" id="258733"/>
<dbReference type="KEGG" id="mmu:258733"/>
<dbReference type="UCSC" id="uc009jck.1">
    <property type="organism name" value="mouse"/>
</dbReference>
<dbReference type="AGR" id="MGI:3030331"/>
<dbReference type="CTD" id="258733"/>
<dbReference type="MGI" id="MGI:3030331">
    <property type="gene designation" value="Or5p72"/>
</dbReference>
<dbReference type="VEuPathDB" id="HostDB:ENSMUSG00000095239"/>
<dbReference type="eggNOG" id="ENOG502SKA1">
    <property type="taxonomic scope" value="Eukaryota"/>
</dbReference>
<dbReference type="GeneTree" id="ENSGT01130000278279"/>
<dbReference type="HOGENOM" id="CLU_012526_1_0_1"/>
<dbReference type="InParanoid" id="Q8VG08"/>
<dbReference type="OMA" id="WKVMARE"/>
<dbReference type="OrthoDB" id="9591706at2759"/>
<dbReference type="PhylomeDB" id="Q8VG08"/>
<dbReference type="TreeFam" id="TF338848"/>
<dbReference type="BioGRID-ORCS" id="258733">
    <property type="hits" value="1 hit in 71 CRISPR screens"/>
</dbReference>
<dbReference type="PRO" id="PR:Q8VG08"/>
<dbReference type="Proteomes" id="UP000000589">
    <property type="component" value="Chromosome 7"/>
</dbReference>
<dbReference type="RNAct" id="Q8VG08">
    <property type="molecule type" value="protein"/>
</dbReference>
<dbReference type="GO" id="GO:0016020">
    <property type="term" value="C:membrane"/>
    <property type="evidence" value="ECO:0000247"/>
    <property type="project" value="MGI"/>
</dbReference>
<dbReference type="GO" id="GO:0005886">
    <property type="term" value="C:plasma membrane"/>
    <property type="evidence" value="ECO:0007669"/>
    <property type="project" value="UniProtKB-SubCell"/>
</dbReference>
<dbReference type="GO" id="GO:0004930">
    <property type="term" value="F:G protein-coupled receptor activity"/>
    <property type="evidence" value="ECO:0007669"/>
    <property type="project" value="UniProtKB-KW"/>
</dbReference>
<dbReference type="GO" id="GO:0004984">
    <property type="term" value="F:olfactory receptor activity"/>
    <property type="evidence" value="ECO:0000247"/>
    <property type="project" value="MGI"/>
</dbReference>
<dbReference type="GO" id="GO:0007186">
    <property type="term" value="P:G protein-coupled receptor signaling pathway"/>
    <property type="evidence" value="ECO:0000247"/>
    <property type="project" value="MGI"/>
</dbReference>
<dbReference type="GO" id="GO:0007608">
    <property type="term" value="P:sensory perception of smell"/>
    <property type="evidence" value="ECO:0000247"/>
    <property type="project" value="MGI"/>
</dbReference>
<dbReference type="CDD" id="cd15416">
    <property type="entry name" value="7tmA_OR5P-like"/>
    <property type="match status" value="1"/>
</dbReference>
<dbReference type="FunFam" id="1.20.1070.10:FF:000004">
    <property type="entry name" value="Olfactory receptor"/>
    <property type="match status" value="1"/>
</dbReference>
<dbReference type="Gene3D" id="1.20.1070.10">
    <property type="entry name" value="Rhodopsin 7-helix transmembrane proteins"/>
    <property type="match status" value="1"/>
</dbReference>
<dbReference type="InterPro" id="IPR000276">
    <property type="entry name" value="GPCR_Rhodpsn"/>
</dbReference>
<dbReference type="InterPro" id="IPR017452">
    <property type="entry name" value="GPCR_Rhodpsn_7TM"/>
</dbReference>
<dbReference type="InterPro" id="IPR000725">
    <property type="entry name" value="Olfact_rcpt"/>
</dbReference>
<dbReference type="PANTHER" id="PTHR48018">
    <property type="entry name" value="OLFACTORY RECEPTOR"/>
    <property type="match status" value="1"/>
</dbReference>
<dbReference type="Pfam" id="PF13853">
    <property type="entry name" value="7tm_4"/>
    <property type="match status" value="1"/>
</dbReference>
<dbReference type="PRINTS" id="PR00237">
    <property type="entry name" value="GPCRRHODOPSN"/>
</dbReference>
<dbReference type="PRINTS" id="PR00245">
    <property type="entry name" value="OLFACTORYR"/>
</dbReference>
<dbReference type="SUPFAM" id="SSF81321">
    <property type="entry name" value="Family A G protein-coupled receptor-like"/>
    <property type="match status" value="1"/>
</dbReference>
<dbReference type="PROSITE" id="PS00237">
    <property type="entry name" value="G_PROTEIN_RECEP_F1_1"/>
    <property type="match status" value="1"/>
</dbReference>
<dbReference type="PROSITE" id="PS50262">
    <property type="entry name" value="G_PROTEIN_RECEP_F1_2"/>
    <property type="match status" value="1"/>
</dbReference>